<comment type="function">
    <text evidence="1">Component of the cytochrome b6-f complex, which mediates electron transfer between photosystem II (PSII) and photosystem I (PSI), cyclic electron flow around PSI, and state transitions.</text>
</comment>
<comment type="subunit">
    <text evidence="1">The 4 large subunits of the cytochrome b6-f complex are cytochrome b6, subunit IV (17 kDa polypeptide, PetD), cytochrome f and the Rieske protein, while the 4 small subunits are PetG, PetL, PetM and PetN. The complex functions as a dimer.</text>
</comment>
<comment type="subcellular location">
    <subcellularLocation>
        <location>Plastid</location>
        <location>Chloroplast thylakoid membrane</location>
        <topology>Single-pass membrane protein</topology>
    </subcellularLocation>
</comment>
<comment type="similarity">
    <text evidence="1">Belongs to the PetM family.</text>
</comment>
<accession>A0T0A7</accession>
<dbReference type="EMBL" id="EF067920">
    <property type="protein sequence ID" value="ABK20605.1"/>
    <property type="molecule type" value="Genomic_DNA"/>
</dbReference>
<dbReference type="RefSeq" id="YP_874382.1">
    <property type="nucleotide sequence ID" value="NC_008588.1"/>
</dbReference>
<dbReference type="SMR" id="A0T0A7"/>
<dbReference type="GeneID" id="4524699"/>
<dbReference type="InParanoid" id="A0T0A7"/>
<dbReference type="Proteomes" id="UP000000759">
    <property type="component" value="Chloroplast"/>
</dbReference>
<dbReference type="GO" id="GO:0009535">
    <property type="term" value="C:chloroplast thylakoid membrane"/>
    <property type="evidence" value="ECO:0007669"/>
    <property type="project" value="UniProtKB-SubCell"/>
</dbReference>
<dbReference type="GO" id="GO:0009512">
    <property type="term" value="C:cytochrome b6f complex"/>
    <property type="evidence" value="ECO:0007669"/>
    <property type="project" value="InterPro"/>
</dbReference>
<dbReference type="GO" id="GO:0009055">
    <property type="term" value="F:electron transfer activity"/>
    <property type="evidence" value="ECO:0007669"/>
    <property type="project" value="UniProtKB-UniRule"/>
</dbReference>
<dbReference type="GO" id="GO:0015979">
    <property type="term" value="P:photosynthesis"/>
    <property type="evidence" value="ECO:0007669"/>
    <property type="project" value="UniProtKB-KW"/>
</dbReference>
<dbReference type="HAMAP" id="MF_00396">
    <property type="entry name" value="Cytb6_f_PetM"/>
    <property type="match status" value="1"/>
</dbReference>
<dbReference type="InterPro" id="IPR012595">
    <property type="entry name" value="PetM_cyt_b6/f_cplx_su7"/>
</dbReference>
<dbReference type="Pfam" id="PF08041">
    <property type="entry name" value="PetM"/>
    <property type="match status" value="1"/>
</dbReference>
<sequence>MELIKQIFPFANSEIITAAVVCFSMTLFGLSLGFGLLKVQGE</sequence>
<geneLocation type="chloroplast"/>
<reference key="1">
    <citation type="journal article" date="2007" name="Mol. Genet. Genomics">
        <title>Chloroplast genomes of the diatoms Phaeodactylum tricornutum and Thalassiosira pseudonana: comparison with other plastid genomes of the red lineage.</title>
        <authorList>
            <person name="Oudot-Le Secq M.-P."/>
            <person name="Grimwood J."/>
            <person name="Shapiro H."/>
            <person name="Armbrust E.V."/>
            <person name="Bowler C."/>
            <person name="Green B.R."/>
        </authorList>
    </citation>
    <scope>NUCLEOTIDE SEQUENCE [LARGE SCALE GENOMIC DNA]</scope>
    <source>
        <strain>CCAP 1055/1</strain>
    </source>
</reference>
<protein>
    <recommendedName>
        <fullName evidence="1">Cytochrome b6-f complex subunit 7</fullName>
    </recommendedName>
    <alternativeName>
        <fullName evidence="1">Cytochrome b6-f complex subunit PetM</fullName>
    </alternativeName>
    <alternativeName>
        <fullName evidence="1">Cytochrome b6-f complex subunit VII</fullName>
    </alternativeName>
</protein>
<feature type="chain" id="PRO_0000275540" description="Cytochrome b6-f complex subunit 7">
    <location>
        <begin position="1"/>
        <end position="42"/>
    </location>
</feature>
<feature type="transmembrane region" description="Helical" evidence="1">
    <location>
        <begin position="19"/>
        <end position="37"/>
    </location>
</feature>
<evidence type="ECO:0000255" key="1">
    <source>
        <dbReference type="HAMAP-Rule" id="MF_00396"/>
    </source>
</evidence>
<organism>
    <name type="scientific">Phaeodactylum tricornutum (strain CCAP 1055/1)</name>
    <dbReference type="NCBI Taxonomy" id="556484"/>
    <lineage>
        <taxon>Eukaryota</taxon>
        <taxon>Sar</taxon>
        <taxon>Stramenopiles</taxon>
        <taxon>Ochrophyta</taxon>
        <taxon>Bacillariophyta</taxon>
        <taxon>Bacillariophyceae</taxon>
        <taxon>Bacillariophycidae</taxon>
        <taxon>Naviculales</taxon>
        <taxon>Phaeodactylaceae</taxon>
        <taxon>Phaeodactylum</taxon>
    </lineage>
</organism>
<gene>
    <name evidence="1" type="primary">petM</name>
</gene>
<proteinExistence type="inferred from homology"/>
<keyword id="KW-0150">Chloroplast</keyword>
<keyword id="KW-0249">Electron transport</keyword>
<keyword id="KW-0472">Membrane</keyword>
<keyword id="KW-0602">Photosynthesis</keyword>
<keyword id="KW-0934">Plastid</keyword>
<keyword id="KW-1185">Reference proteome</keyword>
<keyword id="KW-0793">Thylakoid</keyword>
<keyword id="KW-0812">Transmembrane</keyword>
<keyword id="KW-1133">Transmembrane helix</keyword>
<keyword id="KW-0813">Transport</keyword>
<name>PETM_PHATC</name>